<gene>
    <name evidence="1" type="primary">dinB</name>
    <name type="ordered locus">VV2581</name>
</gene>
<dbReference type="EC" id="2.7.7.7" evidence="1"/>
<dbReference type="EMBL" id="BA000037">
    <property type="protein sequence ID" value="BAC95345.1"/>
    <property type="status" value="ALT_INIT"/>
    <property type="molecule type" value="Genomic_DNA"/>
</dbReference>
<dbReference type="RefSeq" id="WP_011079736.1">
    <property type="nucleotide sequence ID" value="NC_005139.1"/>
</dbReference>
<dbReference type="SMR" id="Q7MID6"/>
<dbReference type="STRING" id="672.VV93_v1c22990"/>
<dbReference type="KEGG" id="vvy:VV2581"/>
<dbReference type="eggNOG" id="COG0389">
    <property type="taxonomic scope" value="Bacteria"/>
</dbReference>
<dbReference type="HOGENOM" id="CLU_012348_1_2_6"/>
<dbReference type="Proteomes" id="UP000002675">
    <property type="component" value="Chromosome I"/>
</dbReference>
<dbReference type="GO" id="GO:0005829">
    <property type="term" value="C:cytosol"/>
    <property type="evidence" value="ECO:0007669"/>
    <property type="project" value="TreeGrafter"/>
</dbReference>
<dbReference type="GO" id="GO:0003684">
    <property type="term" value="F:damaged DNA binding"/>
    <property type="evidence" value="ECO:0007669"/>
    <property type="project" value="InterPro"/>
</dbReference>
<dbReference type="GO" id="GO:0003887">
    <property type="term" value="F:DNA-directed DNA polymerase activity"/>
    <property type="evidence" value="ECO:0007669"/>
    <property type="project" value="UniProtKB-UniRule"/>
</dbReference>
<dbReference type="GO" id="GO:0000287">
    <property type="term" value="F:magnesium ion binding"/>
    <property type="evidence" value="ECO:0007669"/>
    <property type="project" value="UniProtKB-UniRule"/>
</dbReference>
<dbReference type="GO" id="GO:0006261">
    <property type="term" value="P:DNA-templated DNA replication"/>
    <property type="evidence" value="ECO:0007669"/>
    <property type="project" value="UniProtKB-UniRule"/>
</dbReference>
<dbReference type="GO" id="GO:0042276">
    <property type="term" value="P:error-prone translesion synthesis"/>
    <property type="evidence" value="ECO:0007669"/>
    <property type="project" value="TreeGrafter"/>
</dbReference>
<dbReference type="GO" id="GO:0009432">
    <property type="term" value="P:SOS response"/>
    <property type="evidence" value="ECO:0007669"/>
    <property type="project" value="TreeGrafter"/>
</dbReference>
<dbReference type="CDD" id="cd03586">
    <property type="entry name" value="PolY_Pol_IV_kappa"/>
    <property type="match status" value="1"/>
</dbReference>
<dbReference type="FunFam" id="1.10.150.20:FF:000019">
    <property type="entry name" value="DNA polymerase IV"/>
    <property type="match status" value="1"/>
</dbReference>
<dbReference type="FunFam" id="3.30.1490.100:FF:000002">
    <property type="entry name" value="DNA polymerase IV"/>
    <property type="match status" value="1"/>
</dbReference>
<dbReference type="FunFam" id="3.30.70.270:FF:000002">
    <property type="entry name" value="DNA polymerase IV"/>
    <property type="match status" value="1"/>
</dbReference>
<dbReference type="FunFam" id="3.40.1170.60:FF:000001">
    <property type="entry name" value="DNA polymerase IV"/>
    <property type="match status" value="1"/>
</dbReference>
<dbReference type="Gene3D" id="3.30.70.270">
    <property type="match status" value="1"/>
</dbReference>
<dbReference type="Gene3D" id="3.40.1170.60">
    <property type="match status" value="1"/>
</dbReference>
<dbReference type="Gene3D" id="1.10.150.20">
    <property type="entry name" value="5' to 3' exonuclease, C-terminal subdomain"/>
    <property type="match status" value="1"/>
</dbReference>
<dbReference type="Gene3D" id="3.30.1490.100">
    <property type="entry name" value="DNA polymerase, Y-family, little finger domain"/>
    <property type="match status" value="1"/>
</dbReference>
<dbReference type="HAMAP" id="MF_01113">
    <property type="entry name" value="DNApol_IV"/>
    <property type="match status" value="1"/>
</dbReference>
<dbReference type="InterPro" id="IPR043502">
    <property type="entry name" value="DNA/RNA_pol_sf"/>
</dbReference>
<dbReference type="InterPro" id="IPR036775">
    <property type="entry name" value="DNA_pol_Y-fam_lit_finger_sf"/>
</dbReference>
<dbReference type="InterPro" id="IPR017961">
    <property type="entry name" value="DNA_pol_Y-fam_little_finger"/>
</dbReference>
<dbReference type="InterPro" id="IPR050116">
    <property type="entry name" value="DNA_polymerase-Y"/>
</dbReference>
<dbReference type="InterPro" id="IPR022880">
    <property type="entry name" value="DNApol_IV"/>
</dbReference>
<dbReference type="InterPro" id="IPR053848">
    <property type="entry name" value="IMS_HHH_1"/>
</dbReference>
<dbReference type="InterPro" id="IPR043128">
    <property type="entry name" value="Rev_trsase/Diguanyl_cyclase"/>
</dbReference>
<dbReference type="InterPro" id="IPR001126">
    <property type="entry name" value="UmuC"/>
</dbReference>
<dbReference type="NCBIfam" id="NF002677">
    <property type="entry name" value="PRK02406.1"/>
    <property type="match status" value="1"/>
</dbReference>
<dbReference type="PANTHER" id="PTHR11076:SF33">
    <property type="entry name" value="DNA POLYMERASE KAPPA"/>
    <property type="match status" value="1"/>
</dbReference>
<dbReference type="PANTHER" id="PTHR11076">
    <property type="entry name" value="DNA REPAIR POLYMERASE UMUC / TRANSFERASE FAMILY MEMBER"/>
    <property type="match status" value="1"/>
</dbReference>
<dbReference type="Pfam" id="PF00817">
    <property type="entry name" value="IMS"/>
    <property type="match status" value="1"/>
</dbReference>
<dbReference type="Pfam" id="PF11799">
    <property type="entry name" value="IMS_C"/>
    <property type="match status" value="1"/>
</dbReference>
<dbReference type="Pfam" id="PF21999">
    <property type="entry name" value="IMS_HHH_1"/>
    <property type="match status" value="1"/>
</dbReference>
<dbReference type="SUPFAM" id="SSF56672">
    <property type="entry name" value="DNA/RNA polymerases"/>
    <property type="match status" value="1"/>
</dbReference>
<dbReference type="SUPFAM" id="SSF100879">
    <property type="entry name" value="Lesion bypass DNA polymerase (Y-family), little finger domain"/>
    <property type="match status" value="1"/>
</dbReference>
<dbReference type="PROSITE" id="PS50173">
    <property type="entry name" value="UMUC"/>
    <property type="match status" value="1"/>
</dbReference>
<keyword id="KW-0963">Cytoplasm</keyword>
<keyword id="KW-0227">DNA damage</keyword>
<keyword id="KW-0234">DNA repair</keyword>
<keyword id="KW-0235">DNA replication</keyword>
<keyword id="KW-0238">DNA-binding</keyword>
<keyword id="KW-0239">DNA-directed DNA polymerase</keyword>
<keyword id="KW-0460">Magnesium</keyword>
<keyword id="KW-0479">Metal-binding</keyword>
<keyword id="KW-0515">Mutator protein</keyword>
<keyword id="KW-0548">Nucleotidyltransferase</keyword>
<keyword id="KW-0808">Transferase</keyword>
<reference key="1">
    <citation type="journal article" date="2003" name="Genome Res.">
        <title>Comparative genome analysis of Vibrio vulnificus, a marine pathogen.</title>
        <authorList>
            <person name="Chen C.-Y."/>
            <person name="Wu K.-M."/>
            <person name="Chang Y.-C."/>
            <person name="Chang C.-H."/>
            <person name="Tsai H.-C."/>
            <person name="Liao T.-L."/>
            <person name="Liu Y.-M."/>
            <person name="Chen H.-J."/>
            <person name="Shen A.B.-T."/>
            <person name="Li J.-C."/>
            <person name="Su T.-L."/>
            <person name="Shao C.-P."/>
            <person name="Lee C.-T."/>
            <person name="Hor L.-I."/>
            <person name="Tsai S.-F."/>
        </authorList>
    </citation>
    <scope>NUCLEOTIDE SEQUENCE [LARGE SCALE GENOMIC DNA]</scope>
    <source>
        <strain>YJ016</strain>
    </source>
</reference>
<protein>
    <recommendedName>
        <fullName evidence="1">DNA polymerase IV</fullName>
        <shortName evidence="1">Pol IV</shortName>
        <ecNumber evidence="1">2.7.7.7</ecNumber>
    </recommendedName>
</protein>
<organism>
    <name type="scientific">Vibrio vulnificus (strain YJ016)</name>
    <dbReference type="NCBI Taxonomy" id="196600"/>
    <lineage>
        <taxon>Bacteria</taxon>
        <taxon>Pseudomonadati</taxon>
        <taxon>Pseudomonadota</taxon>
        <taxon>Gammaproteobacteria</taxon>
        <taxon>Vibrionales</taxon>
        <taxon>Vibrionaceae</taxon>
        <taxon>Vibrio</taxon>
    </lineage>
</organism>
<comment type="function">
    <text evidence="1">Poorly processive, error-prone DNA polymerase involved in untargeted mutagenesis. Copies undamaged DNA at stalled replication forks, which arise in vivo from mismatched or misaligned primer ends. These misaligned primers can be extended by PolIV. Exhibits no 3'-5' exonuclease (proofreading) activity. May be involved in translesional synthesis, in conjunction with the beta clamp from PolIII.</text>
</comment>
<comment type="catalytic activity">
    <reaction evidence="1">
        <text>DNA(n) + a 2'-deoxyribonucleoside 5'-triphosphate = DNA(n+1) + diphosphate</text>
        <dbReference type="Rhea" id="RHEA:22508"/>
        <dbReference type="Rhea" id="RHEA-COMP:17339"/>
        <dbReference type="Rhea" id="RHEA-COMP:17340"/>
        <dbReference type="ChEBI" id="CHEBI:33019"/>
        <dbReference type="ChEBI" id="CHEBI:61560"/>
        <dbReference type="ChEBI" id="CHEBI:173112"/>
        <dbReference type="EC" id="2.7.7.7"/>
    </reaction>
</comment>
<comment type="cofactor">
    <cofactor evidence="1">
        <name>Mg(2+)</name>
        <dbReference type="ChEBI" id="CHEBI:18420"/>
    </cofactor>
    <text evidence="1">Binds 2 magnesium ions per subunit.</text>
</comment>
<comment type="subunit">
    <text evidence="1">Monomer.</text>
</comment>
<comment type="subcellular location">
    <subcellularLocation>
        <location evidence="1">Cytoplasm</location>
    </subcellularLocation>
</comment>
<comment type="similarity">
    <text evidence="1">Belongs to the DNA polymerase type-Y family.</text>
</comment>
<comment type="sequence caution" evidence="2">
    <conflict type="erroneous initiation">
        <sequence resource="EMBL-CDS" id="BAC95345"/>
    </conflict>
</comment>
<feature type="chain" id="PRO_0000173965" description="DNA polymerase IV">
    <location>
        <begin position="1"/>
        <end position="354"/>
    </location>
</feature>
<feature type="domain" description="UmuC" evidence="1">
    <location>
        <begin position="8"/>
        <end position="189"/>
    </location>
</feature>
<feature type="active site" evidence="1">
    <location>
        <position position="108"/>
    </location>
</feature>
<feature type="binding site" evidence="1">
    <location>
        <position position="12"/>
    </location>
    <ligand>
        <name>Mg(2+)</name>
        <dbReference type="ChEBI" id="CHEBI:18420"/>
    </ligand>
</feature>
<feature type="binding site" evidence="1">
    <location>
        <position position="107"/>
    </location>
    <ligand>
        <name>Mg(2+)</name>
        <dbReference type="ChEBI" id="CHEBI:18420"/>
    </ligand>
</feature>
<feature type="site" description="Substrate discrimination" evidence="1">
    <location>
        <position position="17"/>
    </location>
</feature>
<sequence>MSTQMRKIIHIDMDCFYAAVEMRDNPNFRSRPLAVGGHEKQRGVISTCNYEARKFGVRSAMPTAQALKLCPSLLVVPGRMQVYKEVSTHIRSIFSRYTHLIEPLSLDEAYLDVTDSTQCHGSATLIAEAIRRDIWNELQLTASAGVAPIKFLAKVASDMNKPNGQFVIPPEQVQSVIDTLPLQKIPGVGKVSLEKLNQAGLYVCQDVKNSDYRQLLKQFGRLGASLWQRSHGIDEREVIVERERKSVGVERTFTQNIVTYEQCWQVIEEKLFPELAIRLEKANPEKAIIKQGIKMKFADFQLTTIEHVHHELELAYFRELLQDILQRQKGREIRLLGLSVMLKPEEQARQLSLL</sequence>
<evidence type="ECO:0000255" key="1">
    <source>
        <dbReference type="HAMAP-Rule" id="MF_01113"/>
    </source>
</evidence>
<evidence type="ECO:0000305" key="2"/>
<proteinExistence type="inferred from homology"/>
<name>DPO4_VIBVY</name>
<accession>Q7MID6</accession>